<feature type="chain" id="PRO_1000136539" description="UPF0253 protein YaeP">
    <location>
        <begin position="1"/>
        <end position="66"/>
    </location>
</feature>
<name>YAEP_ECOSM</name>
<accession>B1LGZ2</accession>
<protein>
    <recommendedName>
        <fullName evidence="1">UPF0253 protein YaeP</fullName>
    </recommendedName>
</protein>
<dbReference type="EMBL" id="CP000970">
    <property type="protein sequence ID" value="ACB17427.1"/>
    <property type="molecule type" value="Genomic_DNA"/>
</dbReference>
<dbReference type="RefSeq" id="WP_000417058.1">
    <property type="nucleotide sequence ID" value="NC_010498.1"/>
</dbReference>
<dbReference type="SMR" id="B1LGZ2"/>
<dbReference type="KEGG" id="ecm:EcSMS35_0201"/>
<dbReference type="HOGENOM" id="CLU_190008_0_0_6"/>
<dbReference type="Proteomes" id="UP000007011">
    <property type="component" value="Chromosome"/>
</dbReference>
<dbReference type="HAMAP" id="MF_01064">
    <property type="entry name" value="UPF0253"/>
    <property type="match status" value="1"/>
</dbReference>
<dbReference type="InterPro" id="IPR009624">
    <property type="entry name" value="UPF0253"/>
</dbReference>
<dbReference type="NCBIfam" id="NF003436">
    <property type="entry name" value="PRK04964.1"/>
    <property type="match status" value="1"/>
</dbReference>
<dbReference type="Pfam" id="PF06786">
    <property type="entry name" value="UPF0253"/>
    <property type="match status" value="1"/>
</dbReference>
<evidence type="ECO:0000255" key="1">
    <source>
        <dbReference type="HAMAP-Rule" id="MF_01064"/>
    </source>
</evidence>
<reference key="1">
    <citation type="journal article" date="2008" name="J. Bacteriol.">
        <title>Insights into the environmental resistance gene pool from the genome sequence of the multidrug-resistant environmental isolate Escherichia coli SMS-3-5.</title>
        <authorList>
            <person name="Fricke W.F."/>
            <person name="Wright M.S."/>
            <person name="Lindell A.H."/>
            <person name="Harkins D.M."/>
            <person name="Baker-Austin C."/>
            <person name="Ravel J."/>
            <person name="Stepanauskas R."/>
        </authorList>
    </citation>
    <scope>NUCLEOTIDE SEQUENCE [LARGE SCALE GENOMIC DNA]</scope>
    <source>
        <strain>SMS-3-5 / SECEC</strain>
    </source>
</reference>
<proteinExistence type="inferred from homology"/>
<organism>
    <name type="scientific">Escherichia coli (strain SMS-3-5 / SECEC)</name>
    <dbReference type="NCBI Taxonomy" id="439855"/>
    <lineage>
        <taxon>Bacteria</taxon>
        <taxon>Pseudomonadati</taxon>
        <taxon>Pseudomonadota</taxon>
        <taxon>Gammaproteobacteria</taxon>
        <taxon>Enterobacterales</taxon>
        <taxon>Enterobacteriaceae</taxon>
        <taxon>Escherichia</taxon>
    </lineage>
</organism>
<sequence>MEKYCELIRKRYAEIASGDLGYVPDALGCVLKVLNEMAADDALSEAVREKAAYAAANLLVSDYVNE</sequence>
<gene>
    <name evidence="1" type="primary">yaeP</name>
    <name type="ordered locus">EcSMS35_0201</name>
</gene>
<comment type="similarity">
    <text evidence="1">Belongs to the UPF0253 family.</text>
</comment>